<gene>
    <name evidence="1" type="primary">anmK</name>
    <name type="ordered locus">Shew185_1212</name>
</gene>
<organism>
    <name type="scientific">Shewanella baltica (strain OS185)</name>
    <dbReference type="NCBI Taxonomy" id="402882"/>
    <lineage>
        <taxon>Bacteria</taxon>
        <taxon>Pseudomonadati</taxon>
        <taxon>Pseudomonadota</taxon>
        <taxon>Gammaproteobacteria</taxon>
        <taxon>Alteromonadales</taxon>
        <taxon>Shewanellaceae</taxon>
        <taxon>Shewanella</taxon>
    </lineage>
</organism>
<evidence type="ECO:0000255" key="1">
    <source>
        <dbReference type="HAMAP-Rule" id="MF_01270"/>
    </source>
</evidence>
<accession>A6WKM4</accession>
<name>ANMK_SHEB8</name>
<proteinExistence type="inferred from homology"/>
<reference key="1">
    <citation type="submission" date="2007-07" db="EMBL/GenBank/DDBJ databases">
        <title>Complete sequence of chromosome of Shewanella baltica OS185.</title>
        <authorList>
            <consortium name="US DOE Joint Genome Institute"/>
            <person name="Copeland A."/>
            <person name="Lucas S."/>
            <person name="Lapidus A."/>
            <person name="Barry K."/>
            <person name="Glavina del Rio T."/>
            <person name="Dalin E."/>
            <person name="Tice H."/>
            <person name="Pitluck S."/>
            <person name="Sims D."/>
            <person name="Brettin T."/>
            <person name="Bruce D."/>
            <person name="Detter J.C."/>
            <person name="Han C."/>
            <person name="Schmutz J."/>
            <person name="Larimer F."/>
            <person name="Land M."/>
            <person name="Hauser L."/>
            <person name="Kyrpides N."/>
            <person name="Mikhailova N."/>
            <person name="Brettar I."/>
            <person name="Rodrigues J."/>
            <person name="Konstantinidis K."/>
            <person name="Tiedje J."/>
            <person name="Richardson P."/>
        </authorList>
    </citation>
    <scope>NUCLEOTIDE SEQUENCE [LARGE SCALE GENOMIC DNA]</scope>
    <source>
        <strain>OS185</strain>
    </source>
</reference>
<protein>
    <recommendedName>
        <fullName evidence="1">Anhydro-N-acetylmuramic acid kinase</fullName>
        <ecNumber evidence="1">2.7.1.170</ecNumber>
    </recommendedName>
    <alternativeName>
        <fullName evidence="1">AnhMurNAc kinase</fullName>
    </alternativeName>
</protein>
<sequence length="369" mass="39787">MKNAYYIGLMSGTSMDGVDAVLVDFSGAQPQLIASHTEAIPSHLLKGLQRLCLPSTDEINRLGRLDRNVGQLFALAVNNLLSKCTIAKEEVIAIGSHGQTVRHMPNLEVGFTLQIGDPNTIATETGIDVIADFRRKDIALGGQGAPLVPAFHQQTFAEVGKKRIILNIGGIANITYLPGNSDQVLGFDTGPGNTLVDAWIQQVKSEPFDRDGEWAASGKTDQGLLMQLLSHPYFSLAYPKSTGRELFNQAWLEQQLSPFNHLDEEDIQSTLLDLTCHSIAQDIIKLSNEGELFVCGGGAFNGQLMQRLAALLPGYKLDTTSALGVDPKWAEGIAFAWLAMRNHLGLPANLPAVTGASREAVLGGRFSAK</sequence>
<comment type="function">
    <text evidence="1">Catalyzes the specific phosphorylation of 1,6-anhydro-N-acetylmuramic acid (anhMurNAc) with the simultaneous cleavage of the 1,6-anhydro ring, generating MurNAc-6-P. Is required for the utilization of anhMurNAc either imported from the medium or derived from its own cell wall murein, and thus plays a role in cell wall recycling.</text>
</comment>
<comment type="catalytic activity">
    <reaction evidence="1">
        <text>1,6-anhydro-N-acetyl-beta-muramate + ATP + H2O = N-acetyl-D-muramate 6-phosphate + ADP + H(+)</text>
        <dbReference type="Rhea" id="RHEA:24952"/>
        <dbReference type="ChEBI" id="CHEBI:15377"/>
        <dbReference type="ChEBI" id="CHEBI:15378"/>
        <dbReference type="ChEBI" id="CHEBI:30616"/>
        <dbReference type="ChEBI" id="CHEBI:58690"/>
        <dbReference type="ChEBI" id="CHEBI:58722"/>
        <dbReference type="ChEBI" id="CHEBI:456216"/>
        <dbReference type="EC" id="2.7.1.170"/>
    </reaction>
</comment>
<comment type="pathway">
    <text evidence="1">Amino-sugar metabolism; 1,6-anhydro-N-acetylmuramate degradation.</text>
</comment>
<comment type="pathway">
    <text evidence="1">Cell wall biogenesis; peptidoglycan recycling.</text>
</comment>
<comment type="similarity">
    <text evidence="1">Belongs to the anhydro-N-acetylmuramic acid kinase family.</text>
</comment>
<dbReference type="EC" id="2.7.1.170" evidence="1"/>
<dbReference type="EMBL" id="CP000753">
    <property type="protein sequence ID" value="ABS07363.1"/>
    <property type="molecule type" value="Genomic_DNA"/>
</dbReference>
<dbReference type="RefSeq" id="WP_012088585.1">
    <property type="nucleotide sequence ID" value="NC_009665.1"/>
</dbReference>
<dbReference type="SMR" id="A6WKM4"/>
<dbReference type="KEGG" id="sbm:Shew185_1212"/>
<dbReference type="HOGENOM" id="CLU_038782_0_0_6"/>
<dbReference type="UniPathway" id="UPA00343"/>
<dbReference type="UniPathway" id="UPA00544"/>
<dbReference type="GO" id="GO:0005524">
    <property type="term" value="F:ATP binding"/>
    <property type="evidence" value="ECO:0007669"/>
    <property type="project" value="UniProtKB-UniRule"/>
</dbReference>
<dbReference type="GO" id="GO:0016301">
    <property type="term" value="F:kinase activity"/>
    <property type="evidence" value="ECO:0007669"/>
    <property type="project" value="UniProtKB-KW"/>
</dbReference>
<dbReference type="GO" id="GO:0016773">
    <property type="term" value="F:phosphotransferase activity, alcohol group as acceptor"/>
    <property type="evidence" value="ECO:0007669"/>
    <property type="project" value="UniProtKB-UniRule"/>
</dbReference>
<dbReference type="GO" id="GO:0097175">
    <property type="term" value="P:1,6-anhydro-N-acetyl-beta-muramic acid catabolic process"/>
    <property type="evidence" value="ECO:0007669"/>
    <property type="project" value="UniProtKB-UniRule"/>
</dbReference>
<dbReference type="GO" id="GO:0006040">
    <property type="term" value="P:amino sugar metabolic process"/>
    <property type="evidence" value="ECO:0007669"/>
    <property type="project" value="InterPro"/>
</dbReference>
<dbReference type="GO" id="GO:0009254">
    <property type="term" value="P:peptidoglycan turnover"/>
    <property type="evidence" value="ECO:0007669"/>
    <property type="project" value="UniProtKB-UniRule"/>
</dbReference>
<dbReference type="CDD" id="cd24050">
    <property type="entry name" value="ASKHA_NBD_ANMK"/>
    <property type="match status" value="1"/>
</dbReference>
<dbReference type="Gene3D" id="3.30.420.40">
    <property type="match status" value="2"/>
</dbReference>
<dbReference type="HAMAP" id="MF_01270">
    <property type="entry name" value="AnhMurNAc_kinase"/>
    <property type="match status" value="1"/>
</dbReference>
<dbReference type="InterPro" id="IPR005338">
    <property type="entry name" value="Anhydro_N_Ac-Mur_kinase"/>
</dbReference>
<dbReference type="InterPro" id="IPR043129">
    <property type="entry name" value="ATPase_NBD"/>
</dbReference>
<dbReference type="NCBIfam" id="NF007139">
    <property type="entry name" value="PRK09585.1-3"/>
    <property type="match status" value="1"/>
</dbReference>
<dbReference type="NCBIfam" id="NF007148">
    <property type="entry name" value="PRK09585.3-2"/>
    <property type="match status" value="1"/>
</dbReference>
<dbReference type="PANTHER" id="PTHR30605">
    <property type="entry name" value="ANHYDRO-N-ACETYLMURAMIC ACID KINASE"/>
    <property type="match status" value="1"/>
</dbReference>
<dbReference type="PANTHER" id="PTHR30605:SF0">
    <property type="entry name" value="ANHYDRO-N-ACETYLMURAMIC ACID KINASE"/>
    <property type="match status" value="1"/>
</dbReference>
<dbReference type="Pfam" id="PF03702">
    <property type="entry name" value="AnmK"/>
    <property type="match status" value="1"/>
</dbReference>
<dbReference type="SUPFAM" id="SSF53067">
    <property type="entry name" value="Actin-like ATPase domain"/>
    <property type="match status" value="1"/>
</dbReference>
<keyword id="KW-0067">ATP-binding</keyword>
<keyword id="KW-0119">Carbohydrate metabolism</keyword>
<keyword id="KW-0418">Kinase</keyword>
<keyword id="KW-0547">Nucleotide-binding</keyword>
<keyword id="KW-0808">Transferase</keyword>
<feature type="chain" id="PRO_1000067360" description="Anhydro-N-acetylmuramic acid kinase">
    <location>
        <begin position="1"/>
        <end position="369"/>
    </location>
</feature>
<feature type="binding site" evidence="1">
    <location>
        <begin position="12"/>
        <end position="19"/>
    </location>
    <ligand>
        <name>ATP</name>
        <dbReference type="ChEBI" id="CHEBI:30616"/>
    </ligand>
</feature>